<gene>
    <name evidence="1" type="primary">lpxD</name>
    <name type="ordered locus">BQ06940</name>
</gene>
<reference key="1">
    <citation type="journal article" date="2004" name="Proc. Natl. Acad. Sci. U.S.A.">
        <title>The louse-borne human pathogen Bartonella quintana is a genomic derivative of the zoonotic agent Bartonella henselae.</title>
        <authorList>
            <person name="Alsmark U.C.M."/>
            <person name="Frank A.C."/>
            <person name="Karlberg E.O."/>
            <person name="Legault B.-A."/>
            <person name="Ardell D.H."/>
            <person name="Canbaeck B."/>
            <person name="Eriksson A.-S."/>
            <person name="Naeslund A.K."/>
            <person name="Handley S.A."/>
            <person name="Huvet M."/>
            <person name="La Scola B."/>
            <person name="Holmberg M."/>
            <person name="Andersson S.G.E."/>
        </authorList>
    </citation>
    <scope>NUCLEOTIDE SEQUENCE [LARGE SCALE GENOMIC DNA]</scope>
    <source>
        <strain>Toulouse</strain>
    </source>
</reference>
<keyword id="KW-0012">Acyltransferase</keyword>
<keyword id="KW-0441">Lipid A biosynthesis</keyword>
<keyword id="KW-0444">Lipid biosynthesis</keyword>
<keyword id="KW-0443">Lipid metabolism</keyword>
<keyword id="KW-0677">Repeat</keyword>
<keyword id="KW-0808">Transferase</keyword>
<accession>Q6G1J4</accession>
<organism>
    <name type="scientific">Bartonella quintana (strain Toulouse)</name>
    <name type="common">Rochalimaea quintana</name>
    <dbReference type="NCBI Taxonomy" id="283165"/>
    <lineage>
        <taxon>Bacteria</taxon>
        <taxon>Pseudomonadati</taxon>
        <taxon>Pseudomonadota</taxon>
        <taxon>Alphaproteobacteria</taxon>
        <taxon>Hyphomicrobiales</taxon>
        <taxon>Bartonellaceae</taxon>
        <taxon>Bartonella</taxon>
    </lineage>
</organism>
<dbReference type="EC" id="2.3.1.191" evidence="1"/>
<dbReference type="EMBL" id="BX897700">
    <property type="protein sequence ID" value="CAF26183.1"/>
    <property type="molecule type" value="Genomic_DNA"/>
</dbReference>
<dbReference type="RefSeq" id="WP_011179438.1">
    <property type="nucleotide sequence ID" value="NC_005955.1"/>
</dbReference>
<dbReference type="SMR" id="Q6G1J4"/>
<dbReference type="GeneID" id="56532949"/>
<dbReference type="KEGG" id="bqu:BQ06940"/>
<dbReference type="eggNOG" id="COG1044">
    <property type="taxonomic scope" value="Bacteria"/>
</dbReference>
<dbReference type="HOGENOM" id="CLU_049865_0_0_5"/>
<dbReference type="OrthoDB" id="9784739at2"/>
<dbReference type="UniPathway" id="UPA00973"/>
<dbReference type="Proteomes" id="UP000000597">
    <property type="component" value="Chromosome"/>
</dbReference>
<dbReference type="GO" id="GO:0016020">
    <property type="term" value="C:membrane"/>
    <property type="evidence" value="ECO:0007669"/>
    <property type="project" value="GOC"/>
</dbReference>
<dbReference type="GO" id="GO:0016410">
    <property type="term" value="F:N-acyltransferase activity"/>
    <property type="evidence" value="ECO:0007669"/>
    <property type="project" value="InterPro"/>
</dbReference>
<dbReference type="GO" id="GO:0009245">
    <property type="term" value="P:lipid A biosynthetic process"/>
    <property type="evidence" value="ECO:0007669"/>
    <property type="project" value="UniProtKB-UniRule"/>
</dbReference>
<dbReference type="CDD" id="cd03352">
    <property type="entry name" value="LbH_LpxD"/>
    <property type="match status" value="1"/>
</dbReference>
<dbReference type="Gene3D" id="2.160.10.10">
    <property type="entry name" value="Hexapeptide repeat proteins"/>
    <property type="match status" value="1"/>
</dbReference>
<dbReference type="Gene3D" id="3.40.1390.10">
    <property type="entry name" value="MurE/MurF, N-terminal domain"/>
    <property type="match status" value="1"/>
</dbReference>
<dbReference type="HAMAP" id="MF_00523">
    <property type="entry name" value="LpxD"/>
    <property type="match status" value="1"/>
</dbReference>
<dbReference type="InterPro" id="IPR001451">
    <property type="entry name" value="Hexapep"/>
</dbReference>
<dbReference type="InterPro" id="IPR018357">
    <property type="entry name" value="Hexapep_transf_CS"/>
</dbReference>
<dbReference type="InterPro" id="IPR007691">
    <property type="entry name" value="LpxD"/>
</dbReference>
<dbReference type="InterPro" id="IPR011004">
    <property type="entry name" value="Trimer_LpxA-like_sf"/>
</dbReference>
<dbReference type="InterPro" id="IPR020573">
    <property type="entry name" value="UDP_GlcNAc_AcTrfase_non-rep"/>
</dbReference>
<dbReference type="NCBIfam" id="TIGR01853">
    <property type="entry name" value="lipid_A_lpxD"/>
    <property type="match status" value="1"/>
</dbReference>
<dbReference type="NCBIfam" id="NF002060">
    <property type="entry name" value="PRK00892.1"/>
    <property type="match status" value="1"/>
</dbReference>
<dbReference type="PANTHER" id="PTHR43378">
    <property type="entry name" value="UDP-3-O-ACYLGLUCOSAMINE N-ACYLTRANSFERASE"/>
    <property type="match status" value="1"/>
</dbReference>
<dbReference type="PANTHER" id="PTHR43378:SF2">
    <property type="entry name" value="UDP-3-O-ACYLGLUCOSAMINE N-ACYLTRANSFERASE 1, MITOCHONDRIAL-RELATED"/>
    <property type="match status" value="1"/>
</dbReference>
<dbReference type="Pfam" id="PF00132">
    <property type="entry name" value="Hexapep"/>
    <property type="match status" value="2"/>
</dbReference>
<dbReference type="Pfam" id="PF04613">
    <property type="entry name" value="LpxD"/>
    <property type="match status" value="1"/>
</dbReference>
<dbReference type="SUPFAM" id="SSF51161">
    <property type="entry name" value="Trimeric LpxA-like enzymes"/>
    <property type="match status" value="1"/>
</dbReference>
<dbReference type="PROSITE" id="PS00101">
    <property type="entry name" value="HEXAPEP_TRANSFERASES"/>
    <property type="match status" value="1"/>
</dbReference>
<sequence>MADTFFFTPSRRLTVANVAELTGAKLLNPEFSNIVISTLSSLEGAGEGSLVFVEHRKFSDALLGSSAVAVFCTNEIVFKVPESMAILVTSTPQRDFAQIGRILFPDSVKPMPWFGQREISPYAHIHPSAKFGHDVCIEAGAVIGKNVEIGSGSLISSTAVIGENCRIGRDCYIAPKVTVQYSLIGDRVYLYPGTCIGQDGFGYVGGASGIEKVPQLGRVIIKDGVEIGANTTIDRGTFEDTIIGEGSKIDNLVQIAHNVKIGRYCLIAAQCGIAGSTSIGDMSQLGGSVGVADHIVIGKCVQIAAGSGVMNDIPDGEKWGGSPARPFKQWFREVAALRNIGKVKKEKR</sequence>
<name>LPXD_BARQU</name>
<protein>
    <recommendedName>
        <fullName evidence="1">UDP-3-O-acylglucosamine N-acyltransferase</fullName>
        <ecNumber evidence="1">2.3.1.191</ecNumber>
    </recommendedName>
</protein>
<proteinExistence type="inferred from homology"/>
<comment type="function">
    <text evidence="1">Catalyzes the N-acylation of UDP-3-O-acylglucosamine using 3-hydroxyacyl-ACP as the acyl donor. Is involved in the biosynthesis of lipid A, a phosphorylated glycolipid that anchors the lipopolysaccharide to the outer membrane of the cell.</text>
</comment>
<comment type="catalytic activity">
    <reaction evidence="1">
        <text>a UDP-3-O-[(3R)-3-hydroxyacyl]-alpha-D-glucosamine + a (3R)-hydroxyacyl-[ACP] = a UDP-2-N,3-O-bis[(3R)-3-hydroxyacyl]-alpha-D-glucosamine + holo-[ACP] + H(+)</text>
        <dbReference type="Rhea" id="RHEA:53836"/>
        <dbReference type="Rhea" id="RHEA-COMP:9685"/>
        <dbReference type="Rhea" id="RHEA-COMP:9945"/>
        <dbReference type="ChEBI" id="CHEBI:15378"/>
        <dbReference type="ChEBI" id="CHEBI:64479"/>
        <dbReference type="ChEBI" id="CHEBI:78827"/>
        <dbReference type="ChEBI" id="CHEBI:137740"/>
        <dbReference type="ChEBI" id="CHEBI:137748"/>
        <dbReference type="EC" id="2.3.1.191"/>
    </reaction>
</comment>
<comment type="pathway">
    <text evidence="1">Bacterial outer membrane biogenesis; LPS lipid A biosynthesis.</text>
</comment>
<comment type="subunit">
    <text evidence="1">Homotrimer.</text>
</comment>
<comment type="similarity">
    <text evidence="1">Belongs to the transferase hexapeptide repeat family. LpxD subfamily.</text>
</comment>
<evidence type="ECO:0000255" key="1">
    <source>
        <dbReference type="HAMAP-Rule" id="MF_00523"/>
    </source>
</evidence>
<feature type="chain" id="PRO_0000059647" description="UDP-3-O-acylglucosamine N-acyltransferase">
    <location>
        <begin position="1"/>
        <end position="348"/>
    </location>
</feature>
<feature type="active site" description="Proton acceptor" evidence="1">
    <location>
        <position position="257"/>
    </location>
</feature>